<gene>
    <name type="primary">NLRP2</name>
    <name type="synonym">NALP2</name>
    <name type="synonym">NBS1</name>
    <name type="synonym">PAN1</name>
    <name type="synonym">PYPAF2</name>
</gene>
<reference key="1">
    <citation type="journal article" date="2000" name="Cell Death Differ.">
        <title>The PYRIN domain: a novel motif found in apoptosis and inflammation proteins.</title>
        <authorList>
            <person name="Bertin J."/>
            <person name="DiStefano P.S."/>
        </authorList>
    </citation>
    <scope>NUCLEOTIDE SEQUENCE [MRNA] (ISOFORM 2)</scope>
    <scope>VARIANT LYS-364</scope>
</reference>
<reference key="2">
    <citation type="journal article" date="2001" name="Curr. Biol.">
        <title>The pyrin domain: a possible member of the death domain-fold family implicated in apoptosis and inflammation.</title>
        <authorList>
            <person name="Martinon F."/>
            <person name="Hofmann K."/>
            <person name="Tschopp J."/>
        </authorList>
    </citation>
    <scope>NUCLEOTIDE SEQUENCE [MRNA] (ISOFORM 1)</scope>
</reference>
<reference key="3">
    <citation type="journal article" date="2002" name="J. Biol. Chem.">
        <title>PYPAF7, a novel PYRIN-containing Apaf1-like protein that regulates activation of NF-kappa B and caspase-1-dependent cytokine processing.</title>
        <authorList>
            <person name="Wang L."/>
            <person name="Manji G.A."/>
            <person name="Grenier J.M."/>
            <person name="Al-Garawi A."/>
            <person name="Merriam S."/>
            <person name="Lora J.M."/>
            <person name="Geddes B.J."/>
            <person name="Briskin M."/>
            <person name="DiStefano P.S."/>
            <person name="Bertin J."/>
        </authorList>
    </citation>
    <scope>NUCLEOTIDE SEQUENCE [MRNA] (ISOFORM 1)</scope>
</reference>
<reference key="4">
    <citation type="journal article" date="2004" name="Nat. Genet.">
        <title>Complete sequencing and characterization of 21,243 full-length human cDNAs.</title>
        <authorList>
            <person name="Ota T."/>
            <person name="Suzuki Y."/>
            <person name="Nishikawa T."/>
            <person name="Otsuki T."/>
            <person name="Sugiyama T."/>
            <person name="Irie R."/>
            <person name="Wakamatsu A."/>
            <person name="Hayashi K."/>
            <person name="Sato H."/>
            <person name="Nagai K."/>
            <person name="Kimura K."/>
            <person name="Makita H."/>
            <person name="Sekine M."/>
            <person name="Obayashi M."/>
            <person name="Nishi T."/>
            <person name="Shibahara T."/>
            <person name="Tanaka T."/>
            <person name="Ishii S."/>
            <person name="Yamamoto J."/>
            <person name="Saito K."/>
            <person name="Kawai Y."/>
            <person name="Isono Y."/>
            <person name="Nakamura Y."/>
            <person name="Nagahari K."/>
            <person name="Murakami K."/>
            <person name="Yasuda T."/>
            <person name="Iwayanagi T."/>
            <person name="Wagatsuma M."/>
            <person name="Shiratori A."/>
            <person name="Sudo H."/>
            <person name="Hosoiri T."/>
            <person name="Kaku Y."/>
            <person name="Kodaira H."/>
            <person name="Kondo H."/>
            <person name="Sugawara M."/>
            <person name="Takahashi M."/>
            <person name="Kanda K."/>
            <person name="Yokoi T."/>
            <person name="Furuya T."/>
            <person name="Kikkawa E."/>
            <person name="Omura Y."/>
            <person name="Abe K."/>
            <person name="Kamihara K."/>
            <person name="Katsuta N."/>
            <person name="Sato K."/>
            <person name="Tanikawa M."/>
            <person name="Yamazaki M."/>
            <person name="Ninomiya K."/>
            <person name="Ishibashi T."/>
            <person name="Yamashita H."/>
            <person name="Murakawa K."/>
            <person name="Fujimori K."/>
            <person name="Tanai H."/>
            <person name="Kimata M."/>
            <person name="Watanabe M."/>
            <person name="Hiraoka S."/>
            <person name="Chiba Y."/>
            <person name="Ishida S."/>
            <person name="Ono Y."/>
            <person name="Takiguchi S."/>
            <person name="Watanabe S."/>
            <person name="Yosida M."/>
            <person name="Hotuta T."/>
            <person name="Kusano J."/>
            <person name="Kanehori K."/>
            <person name="Takahashi-Fujii A."/>
            <person name="Hara H."/>
            <person name="Tanase T.-O."/>
            <person name="Nomura Y."/>
            <person name="Togiya S."/>
            <person name="Komai F."/>
            <person name="Hara R."/>
            <person name="Takeuchi K."/>
            <person name="Arita M."/>
            <person name="Imose N."/>
            <person name="Musashino K."/>
            <person name="Yuuki H."/>
            <person name="Oshima A."/>
            <person name="Sasaki N."/>
            <person name="Aotsuka S."/>
            <person name="Yoshikawa Y."/>
            <person name="Matsunawa H."/>
            <person name="Ichihara T."/>
            <person name="Shiohata N."/>
            <person name="Sano S."/>
            <person name="Moriya S."/>
            <person name="Momiyama H."/>
            <person name="Satoh N."/>
            <person name="Takami S."/>
            <person name="Terashima Y."/>
            <person name="Suzuki O."/>
            <person name="Nakagawa S."/>
            <person name="Senoh A."/>
            <person name="Mizoguchi H."/>
            <person name="Goto Y."/>
            <person name="Shimizu F."/>
            <person name="Wakebe H."/>
            <person name="Hishigaki H."/>
            <person name="Watanabe T."/>
            <person name="Sugiyama A."/>
            <person name="Takemoto M."/>
            <person name="Kawakami B."/>
            <person name="Yamazaki M."/>
            <person name="Watanabe K."/>
            <person name="Kumagai A."/>
            <person name="Itakura S."/>
            <person name="Fukuzumi Y."/>
            <person name="Fujimori Y."/>
            <person name="Komiyama M."/>
            <person name="Tashiro H."/>
            <person name="Tanigami A."/>
            <person name="Fujiwara T."/>
            <person name="Ono T."/>
            <person name="Yamada K."/>
            <person name="Fujii Y."/>
            <person name="Ozaki K."/>
            <person name="Hirao M."/>
            <person name="Ohmori Y."/>
            <person name="Kawabata A."/>
            <person name="Hikiji T."/>
            <person name="Kobatake N."/>
            <person name="Inagaki H."/>
            <person name="Ikema Y."/>
            <person name="Okamoto S."/>
            <person name="Okitani R."/>
            <person name="Kawakami T."/>
            <person name="Noguchi S."/>
            <person name="Itoh T."/>
            <person name="Shigeta K."/>
            <person name="Senba T."/>
            <person name="Matsumura K."/>
            <person name="Nakajima Y."/>
            <person name="Mizuno T."/>
            <person name="Morinaga M."/>
            <person name="Sasaki M."/>
            <person name="Togashi T."/>
            <person name="Oyama M."/>
            <person name="Hata H."/>
            <person name="Watanabe M."/>
            <person name="Komatsu T."/>
            <person name="Mizushima-Sugano J."/>
            <person name="Satoh T."/>
            <person name="Shirai Y."/>
            <person name="Takahashi Y."/>
            <person name="Nakagawa K."/>
            <person name="Okumura K."/>
            <person name="Nagase T."/>
            <person name="Nomura N."/>
            <person name="Kikuchi H."/>
            <person name="Masuho Y."/>
            <person name="Yamashita R."/>
            <person name="Nakai K."/>
            <person name="Yada T."/>
            <person name="Nakamura Y."/>
            <person name="Ohara O."/>
            <person name="Isogai T."/>
            <person name="Sugano S."/>
        </authorList>
    </citation>
    <scope>NUCLEOTIDE SEQUENCE [LARGE SCALE MRNA] (ISOFORMS 1 AND 5)</scope>
    <scope>VARIANTS ALA-516; GLY-522 AND ALA-529</scope>
    <source>
        <tissue>Colon</tissue>
        <tissue>Kidney epithelium</tissue>
        <tissue>Testis</tissue>
    </source>
</reference>
<reference key="5">
    <citation type="submission" date="2005-04" db="EMBL/GenBank/DDBJ databases">
        <authorList>
            <person name="Suzuki Y."/>
            <person name="Sugano S."/>
            <person name="Totoki Y."/>
            <person name="Toyoda A."/>
            <person name="Takeda T."/>
            <person name="Sakaki Y."/>
            <person name="Tanaka A."/>
            <person name="Yokoyama S."/>
        </authorList>
    </citation>
    <scope>NUCLEOTIDE SEQUENCE [LARGE SCALE MRNA] (ISOFORMS 1 AND 4)</scope>
    <scope>VARIANTS CYS-175 AND ALA-529</scope>
    <source>
        <tissue>Brain</tissue>
        <tissue>Gastric mucosa</tissue>
    </source>
</reference>
<reference key="6">
    <citation type="journal article" date="2004" name="Nature">
        <title>The DNA sequence and biology of human chromosome 19.</title>
        <authorList>
            <person name="Grimwood J."/>
            <person name="Gordon L.A."/>
            <person name="Olsen A.S."/>
            <person name="Terry A."/>
            <person name="Schmutz J."/>
            <person name="Lamerdin J.E."/>
            <person name="Hellsten U."/>
            <person name="Goodstein D."/>
            <person name="Couronne O."/>
            <person name="Tran-Gyamfi M."/>
            <person name="Aerts A."/>
            <person name="Altherr M."/>
            <person name="Ashworth L."/>
            <person name="Bajorek E."/>
            <person name="Black S."/>
            <person name="Branscomb E."/>
            <person name="Caenepeel S."/>
            <person name="Carrano A.V."/>
            <person name="Caoile C."/>
            <person name="Chan Y.M."/>
            <person name="Christensen M."/>
            <person name="Cleland C.A."/>
            <person name="Copeland A."/>
            <person name="Dalin E."/>
            <person name="Dehal P."/>
            <person name="Denys M."/>
            <person name="Detter J.C."/>
            <person name="Escobar J."/>
            <person name="Flowers D."/>
            <person name="Fotopulos D."/>
            <person name="Garcia C."/>
            <person name="Georgescu A.M."/>
            <person name="Glavina T."/>
            <person name="Gomez M."/>
            <person name="Gonzales E."/>
            <person name="Groza M."/>
            <person name="Hammon N."/>
            <person name="Hawkins T."/>
            <person name="Haydu L."/>
            <person name="Ho I."/>
            <person name="Huang W."/>
            <person name="Israni S."/>
            <person name="Jett J."/>
            <person name="Kadner K."/>
            <person name="Kimball H."/>
            <person name="Kobayashi A."/>
            <person name="Larionov V."/>
            <person name="Leem S.-H."/>
            <person name="Lopez F."/>
            <person name="Lou Y."/>
            <person name="Lowry S."/>
            <person name="Malfatti S."/>
            <person name="Martinez D."/>
            <person name="McCready P.M."/>
            <person name="Medina C."/>
            <person name="Morgan J."/>
            <person name="Nelson K."/>
            <person name="Nolan M."/>
            <person name="Ovcharenko I."/>
            <person name="Pitluck S."/>
            <person name="Pollard M."/>
            <person name="Popkie A.P."/>
            <person name="Predki P."/>
            <person name="Quan G."/>
            <person name="Ramirez L."/>
            <person name="Rash S."/>
            <person name="Retterer J."/>
            <person name="Rodriguez A."/>
            <person name="Rogers S."/>
            <person name="Salamov A."/>
            <person name="Salazar A."/>
            <person name="She X."/>
            <person name="Smith D."/>
            <person name="Slezak T."/>
            <person name="Solovyev V."/>
            <person name="Thayer N."/>
            <person name="Tice H."/>
            <person name="Tsai M."/>
            <person name="Ustaszewska A."/>
            <person name="Vo N."/>
            <person name="Wagner M."/>
            <person name="Wheeler J."/>
            <person name="Wu K."/>
            <person name="Xie G."/>
            <person name="Yang J."/>
            <person name="Dubchak I."/>
            <person name="Furey T.S."/>
            <person name="DeJong P."/>
            <person name="Dickson M."/>
            <person name="Gordon D."/>
            <person name="Eichler E.E."/>
            <person name="Pennacchio L.A."/>
            <person name="Richardson P."/>
            <person name="Stubbs L."/>
            <person name="Rokhsar D.S."/>
            <person name="Myers R.M."/>
            <person name="Rubin E.M."/>
            <person name="Lucas S.M."/>
        </authorList>
    </citation>
    <scope>NUCLEOTIDE SEQUENCE [LARGE SCALE GENOMIC DNA]</scope>
</reference>
<reference key="7">
    <citation type="journal article" date="2004" name="Genome Res.">
        <title>The status, quality, and expansion of the NIH full-length cDNA project: the Mammalian Gene Collection (MGC).</title>
        <authorList>
            <consortium name="The MGC Project Team"/>
        </authorList>
    </citation>
    <scope>NUCLEOTIDE SEQUENCE [LARGE SCALE MRNA] (ISOFORMS 1 AND 3)</scope>
    <scope>VARIANT GLU-1052</scope>
    <source>
        <tissue>Lung</tissue>
        <tissue>Placenta</tissue>
        <tissue>Testis</tissue>
    </source>
</reference>
<reference key="8">
    <citation type="journal article" date="2004" name="Immunity">
        <title>NALP3 forms an IL-1beta-processing inflammasome with increased activity in Muckle-Wells autoinflammatory disorder.</title>
        <authorList>
            <person name="Agostini L."/>
            <person name="Martinon F."/>
            <person name="Burns K."/>
            <person name="McDermott M.F."/>
            <person name="Hawkins P.N."/>
            <person name="Tschopp J."/>
        </authorList>
    </citation>
    <scope>INTERACTION WITH PYCARD AND CARD8</scope>
    <scope>SUBCELLULAR LOCATION</scope>
</reference>
<reference key="9">
    <citation type="journal article" date="2004" name="J. Biol. Chem.">
        <title>PAN1/NALP2/PYPAF2, an inducible inflammatory mediator that regulates NF-kappaB and caspase-1 activation in macrophages.</title>
        <authorList>
            <person name="Bruey J.-M."/>
            <person name="Bruey-Sedano N."/>
            <person name="Newman R."/>
            <person name="Chandler S."/>
            <person name="Stehlik C."/>
            <person name="Reed J.C."/>
        </authorList>
    </citation>
    <scope>FUNCTION</scope>
    <scope>INTERACTION WITH CHUK; IKBKB; IKBKG AND PYCARD</scope>
    <scope>SUBCELLULAR LOCATION</scope>
    <scope>TISSUE SPECIFICITY</scope>
    <scope>INDUCTION</scope>
</reference>
<reference key="10">
    <citation type="journal article" date="2007" name="Cell Death Differ.">
        <title>The SPRY domain of Pyrin, mutated in familial Mediterranean fever patients, interacts with inflammasome components and inhibits proIL-1beta processing.</title>
        <authorList>
            <person name="Papin S."/>
            <person name="Cuenin S."/>
            <person name="Agostini L."/>
            <person name="Martinon F."/>
            <person name="Werner S."/>
            <person name="Beer H.D."/>
            <person name="Grutter C."/>
            <person name="Grutter M."/>
            <person name="Tschopp J."/>
        </authorList>
    </citation>
    <scope>INTERACTION WITH MEFV</scope>
</reference>
<reference key="11">
    <citation type="journal article" date="2007" name="Infect. Immun.">
        <title>Cellular pyrin domain-only protein 2 is a candidate regulator of inflammasome activation.</title>
        <authorList>
            <person name="Dorfleutner A."/>
            <person name="Bryan N.B."/>
            <person name="Talbott S.J."/>
            <person name="Funya K.N."/>
            <person name="Rellick S.L."/>
            <person name="Reed J.C."/>
            <person name="Shi X."/>
            <person name="Rojanasakul Y."/>
            <person name="Flynn D.C."/>
            <person name="Stehlik C."/>
        </authorList>
    </citation>
    <scope>INTERACTION WITH PYDC2</scope>
</reference>
<reference key="12">
    <citation type="journal article" date="2011" name="BMC Syst. Biol.">
        <title>Initial characterization of the human central proteome.</title>
        <authorList>
            <person name="Burkard T.R."/>
            <person name="Planyavsky M."/>
            <person name="Kaupe I."/>
            <person name="Breitwieser F.P."/>
            <person name="Buerckstuemmer T."/>
            <person name="Bennett K.L."/>
            <person name="Superti-Furga G."/>
            <person name="Colinge J."/>
        </authorList>
    </citation>
    <scope>IDENTIFICATION BY MASS SPECTROMETRY [LARGE SCALE ANALYSIS]</scope>
</reference>
<reference key="13">
    <citation type="journal article" date="2011" name="Sci. Signal.">
        <title>System-wide temporal characterization of the proteome and phosphoproteome of human embryonic stem cell differentiation.</title>
        <authorList>
            <person name="Rigbolt K.T."/>
            <person name="Prokhorova T.A."/>
            <person name="Akimov V."/>
            <person name="Henningsen J."/>
            <person name="Johansen P.T."/>
            <person name="Kratchmarova I."/>
            <person name="Kassem M."/>
            <person name="Mann M."/>
            <person name="Olsen J.V."/>
            <person name="Blagoev B."/>
        </authorList>
    </citation>
    <scope>PHOSPHORYLATION [LARGE SCALE ANALYSIS] AT SER-671</scope>
    <scope>IDENTIFICATION BY MASS SPECTROMETRY [LARGE SCALE ANALYSIS]</scope>
</reference>
<reference key="14">
    <citation type="journal article" date="2013" name="J. Proteome Res.">
        <title>Toward a comprehensive characterization of a human cancer cell phosphoproteome.</title>
        <authorList>
            <person name="Zhou H."/>
            <person name="Di Palma S."/>
            <person name="Preisinger C."/>
            <person name="Peng M."/>
            <person name="Polat A.N."/>
            <person name="Heck A.J."/>
            <person name="Mohammed S."/>
        </authorList>
    </citation>
    <scope>PHOSPHORYLATION [LARGE SCALE ANALYSIS] AT SER-671</scope>
    <scope>IDENTIFICATION BY MASS SPECTROMETRY [LARGE SCALE ANALYSIS]</scope>
    <source>
        <tissue>Erythroleukemia</tissue>
    </source>
</reference>
<reference key="15">
    <citation type="journal article" date="2019" name="J. Med. Genet.">
        <title>Mutations in NLRP2 and NLRP5 cause female infertility characterised by early embryonic arrest.</title>
        <authorList>
            <person name="Mu J."/>
            <person name="Wang W."/>
            <person name="Chen B."/>
            <person name="Wu L."/>
            <person name="Li B."/>
            <person name="Mao X."/>
            <person name="Zhang Z."/>
            <person name="Fu J."/>
            <person name="Kuang Y."/>
            <person name="Sun X."/>
            <person name="Li Q."/>
            <person name="Jin L."/>
            <person name="He L."/>
            <person name="Sang Q."/>
            <person name="Wang L."/>
        </authorList>
    </citation>
    <scope>VARIANTS OZEMA18 CYS-175; SER-258; VAL-616; 654-SER--ILE-1062 DEL; 752-ARG--ILE-1062 DEL AND ASP-848</scope>
    <scope>VARIANT MET-221</scope>
    <scope>INVOLVEMENT IN OZEMA18</scope>
    <scope>TISSUE SPECIFICITY</scope>
</reference>
<reference key="16">
    <citation type="journal article" date="2021" name="Clin. Genet.">
        <title>Expanding the genetic and phenotypic spectrum of the subcortical maternal complex genes in recurrent preimplantation embryonic arrest.</title>
        <authorList>
            <person name="Zheng W."/>
            <person name="Hu H."/>
            <person name="Dai J."/>
            <person name="Zhang S."/>
            <person name="Gu Y."/>
            <person name="Dai C."/>
            <person name="Guo J."/>
            <person name="Xu X."/>
            <person name="Li Y."/>
            <person name="Zhang S."/>
            <person name="Hu L."/>
            <person name="Gong F."/>
            <person name="Lu G."/>
            <person name="Lin G."/>
        </authorList>
    </citation>
    <scope>VARIANT OZEMA18 115-ARG--ILE-1062 DEL</scope>
</reference>
<accession>Q9NX02</accession>
<accession>B4DZL7</accession>
<accession>I3L0G4</accession>
<accession>Q53FL5</accession>
<accession>Q59G09</accession>
<accession>Q8IXT0</accession>
<accession>Q9BVN5</accession>
<accession>Q9H6G6</accession>
<accession>Q9HAV9</accession>
<accession>Q9NWK3</accession>
<evidence type="ECO:0000255" key="1">
    <source>
        <dbReference type="PROSITE-ProRule" id="PRU00061"/>
    </source>
</evidence>
<evidence type="ECO:0000255" key="2">
    <source>
        <dbReference type="PROSITE-ProRule" id="PRU00136"/>
    </source>
</evidence>
<evidence type="ECO:0000269" key="3">
    <source>
    </source>
</evidence>
<evidence type="ECO:0000269" key="4">
    <source>
    </source>
</evidence>
<evidence type="ECO:0000269" key="5">
    <source>
    </source>
</evidence>
<evidence type="ECO:0000269" key="6">
    <source>
    </source>
</evidence>
<evidence type="ECO:0000269" key="7">
    <source>
    </source>
</evidence>
<evidence type="ECO:0000269" key="8">
    <source>
    </source>
</evidence>
<evidence type="ECO:0000269" key="9">
    <source>
    </source>
</evidence>
<evidence type="ECO:0000269" key="10">
    <source>
    </source>
</evidence>
<evidence type="ECO:0000269" key="11">
    <source>
    </source>
</evidence>
<evidence type="ECO:0000269" key="12">
    <source ref="5"/>
</evidence>
<evidence type="ECO:0000303" key="13">
    <source>
    </source>
</evidence>
<evidence type="ECO:0000303" key="14">
    <source>
    </source>
</evidence>
<evidence type="ECO:0000303" key="15">
    <source>
    </source>
</evidence>
<evidence type="ECO:0000303" key="16">
    <source ref="5"/>
</evidence>
<evidence type="ECO:0000305" key="17"/>
<evidence type="ECO:0007744" key="18">
    <source>
    </source>
</evidence>
<evidence type="ECO:0007744" key="19">
    <source>
    </source>
</evidence>
<name>NALP2_HUMAN</name>
<dbReference type="EMBL" id="AF298547">
    <property type="protein sequence ID" value="AAG15253.1"/>
    <property type="status" value="ALT_INIT"/>
    <property type="molecule type" value="mRNA"/>
</dbReference>
<dbReference type="EMBL" id="AF310106">
    <property type="protein sequence ID" value="AAG30289.1"/>
    <property type="molecule type" value="mRNA"/>
</dbReference>
<dbReference type="EMBL" id="AF464764">
    <property type="protein sequence ID" value="AAL69962.1"/>
    <property type="molecule type" value="mRNA"/>
</dbReference>
<dbReference type="EMBL" id="AK000517">
    <property type="protein sequence ID" value="BAA91223.1"/>
    <property type="molecule type" value="mRNA"/>
</dbReference>
<dbReference type="EMBL" id="AK000784">
    <property type="protein sequence ID" value="BAA91377.1"/>
    <property type="status" value="ALT_INIT"/>
    <property type="molecule type" value="mRNA"/>
</dbReference>
<dbReference type="EMBL" id="AK025952">
    <property type="protein sequence ID" value="BAB15293.1"/>
    <property type="molecule type" value="mRNA"/>
</dbReference>
<dbReference type="EMBL" id="AK302989">
    <property type="protein sequence ID" value="BAG64129.1"/>
    <property type="molecule type" value="mRNA"/>
</dbReference>
<dbReference type="EMBL" id="AB209300">
    <property type="protein sequence ID" value="BAD92537.1"/>
    <property type="status" value="ALT_SEQ"/>
    <property type="molecule type" value="mRNA"/>
</dbReference>
<dbReference type="EMBL" id="AK223253">
    <property type="protein sequence ID" value="BAD96973.1"/>
    <property type="molecule type" value="mRNA"/>
</dbReference>
<dbReference type="EMBL" id="AK223269">
    <property type="protein sequence ID" value="BAD96989.1"/>
    <property type="molecule type" value="mRNA"/>
</dbReference>
<dbReference type="EMBL" id="AC011476">
    <property type="status" value="NOT_ANNOTATED_CDS"/>
    <property type="molecule type" value="Genomic_DNA"/>
</dbReference>
<dbReference type="EMBL" id="BC001039">
    <property type="protein sequence ID" value="AAH01039.1"/>
    <property type="molecule type" value="mRNA"/>
</dbReference>
<dbReference type="EMBL" id="BC003592">
    <property type="protein sequence ID" value="AAH03592.1"/>
    <property type="molecule type" value="mRNA"/>
</dbReference>
<dbReference type="EMBL" id="BC039269">
    <property type="protein sequence ID" value="AAH39269.1"/>
    <property type="molecule type" value="mRNA"/>
</dbReference>
<dbReference type="CCDS" id="CCDS12913.1">
    <molecule id="Q9NX02-1"/>
</dbReference>
<dbReference type="CCDS" id="CCDS54318.1">
    <molecule id="Q9NX02-5"/>
</dbReference>
<dbReference type="CCDS" id="CCDS54319.1">
    <molecule id="Q9NX02-2"/>
</dbReference>
<dbReference type="RefSeq" id="NP_001167552.1">
    <molecule id="Q9NX02-1"/>
    <property type="nucleotide sequence ID" value="NM_001174081.3"/>
</dbReference>
<dbReference type="RefSeq" id="NP_001167553.1">
    <molecule id="Q9NX02-2"/>
    <property type="nucleotide sequence ID" value="NM_001174082.3"/>
</dbReference>
<dbReference type="RefSeq" id="NP_001167554.1">
    <molecule id="Q9NX02-5"/>
    <property type="nucleotide sequence ID" value="NM_001174083.2"/>
</dbReference>
<dbReference type="RefSeq" id="NP_001334932.1">
    <property type="nucleotide sequence ID" value="NM_001348003.1"/>
</dbReference>
<dbReference type="RefSeq" id="NP_060322.1">
    <molecule id="Q9NX02-1"/>
    <property type="nucleotide sequence ID" value="NM_017852.5"/>
</dbReference>
<dbReference type="PDB" id="9C6V">
    <property type="method" value="X-ray"/>
    <property type="resolution" value="1.70 A"/>
    <property type="chains" value="A=323-331"/>
</dbReference>
<dbReference type="PDB" id="9C6W">
    <property type="method" value="X-ray"/>
    <property type="resolution" value="1.70 A"/>
    <property type="chains" value="A/B=323-331"/>
</dbReference>
<dbReference type="PDB" id="9C6X">
    <property type="method" value="X-ray"/>
    <property type="resolution" value="1.70 A"/>
    <property type="chains" value="A=323-331"/>
</dbReference>
<dbReference type="PDBsum" id="9C6V"/>
<dbReference type="PDBsum" id="9C6W"/>
<dbReference type="PDBsum" id="9C6X"/>
<dbReference type="SMR" id="Q9NX02"/>
<dbReference type="BioGRID" id="120787">
    <property type="interactions" value="54"/>
</dbReference>
<dbReference type="ComplexPortal" id="CPX-2210">
    <property type="entry name" value="Subcortical maternal complex"/>
</dbReference>
<dbReference type="CORUM" id="Q9NX02"/>
<dbReference type="DIP" id="DIP-42460N"/>
<dbReference type="FunCoup" id="Q9NX02">
    <property type="interactions" value="168"/>
</dbReference>
<dbReference type="IntAct" id="Q9NX02">
    <property type="interactions" value="45"/>
</dbReference>
<dbReference type="MINT" id="Q9NX02"/>
<dbReference type="STRING" id="9606.ENSP00000445135"/>
<dbReference type="GlyGen" id="Q9NX02">
    <property type="glycosylation" value="1 site, 1 O-linked glycan (1 site)"/>
</dbReference>
<dbReference type="iPTMnet" id="Q9NX02"/>
<dbReference type="PhosphoSitePlus" id="Q9NX02"/>
<dbReference type="BioMuta" id="NLRP2"/>
<dbReference type="DMDM" id="17380148"/>
<dbReference type="jPOST" id="Q9NX02"/>
<dbReference type="MassIVE" id="Q9NX02"/>
<dbReference type="PaxDb" id="9606-ENSP00000445135"/>
<dbReference type="PeptideAtlas" id="Q9NX02"/>
<dbReference type="ProteomicsDB" id="46351"/>
<dbReference type="ProteomicsDB" id="83009">
    <molecule id="Q9NX02-1"/>
</dbReference>
<dbReference type="ProteomicsDB" id="83010">
    <molecule id="Q9NX02-2"/>
</dbReference>
<dbReference type="ProteomicsDB" id="83011">
    <molecule id="Q9NX02-3"/>
</dbReference>
<dbReference type="ProteomicsDB" id="83012">
    <molecule id="Q9NX02-4"/>
</dbReference>
<dbReference type="Pumba" id="Q9NX02"/>
<dbReference type="Antibodypedia" id="19479">
    <property type="antibodies" value="307 antibodies from 38 providers"/>
</dbReference>
<dbReference type="DNASU" id="55655"/>
<dbReference type="Ensembl" id="ENST00000339757.11">
    <molecule id="Q9NX02-2"/>
    <property type="protein sequence ID" value="ENSP00000344074.7"/>
    <property type="gene ID" value="ENSG00000022556.16"/>
</dbReference>
<dbReference type="Ensembl" id="ENST00000391721.8">
    <molecule id="Q9NX02-4"/>
    <property type="protein sequence ID" value="ENSP00000375601.4"/>
    <property type="gene ID" value="ENSG00000022556.16"/>
</dbReference>
<dbReference type="Ensembl" id="ENST00000427260.6">
    <molecule id="Q9NX02-5"/>
    <property type="protein sequence ID" value="ENSP00000402474.2"/>
    <property type="gene ID" value="ENSG00000022556.16"/>
</dbReference>
<dbReference type="Ensembl" id="ENST00000448584.7">
    <molecule id="Q9NX02-1"/>
    <property type="protein sequence ID" value="ENSP00000409370.2"/>
    <property type="gene ID" value="ENSG00000022556.16"/>
</dbReference>
<dbReference type="Ensembl" id="ENST00000537859.5">
    <molecule id="Q9NX02-2"/>
    <property type="protein sequence ID" value="ENSP00000440601.1"/>
    <property type="gene ID" value="ENSG00000022556.16"/>
</dbReference>
<dbReference type="Ensembl" id="ENST00000543010.5">
    <molecule id="Q9NX02-1"/>
    <property type="protein sequence ID" value="ENSP00000445135.1"/>
    <property type="gene ID" value="ENSG00000022556.16"/>
</dbReference>
<dbReference type="Ensembl" id="ENST00000611410.4">
    <molecule id="Q9NX02-1"/>
    <property type="protein sequence ID" value="ENSP00000479220.1"/>
    <property type="gene ID" value="ENSG00000275843.4"/>
</dbReference>
<dbReference type="Ensembl" id="ENST00000611642.1">
    <molecule id="Q9NX02-5"/>
    <property type="protein sequence ID" value="ENSP00000484150.1"/>
    <property type="gene ID" value="ENSG00000275082.4"/>
</dbReference>
<dbReference type="Ensembl" id="ENST00000611676.4">
    <molecule id="Q9NX02-2"/>
    <property type="protein sequence ID" value="ENSP00000481999.1"/>
    <property type="gene ID" value="ENSG00000275399.4"/>
</dbReference>
<dbReference type="Ensembl" id="ENST00000611679.4">
    <molecule id="Q9NX02-1"/>
    <property type="protein sequence ID" value="ENSP00000484354.1"/>
    <property type="gene ID" value="ENSG00000278682.4"/>
</dbReference>
<dbReference type="Ensembl" id="ENST00000611772.4">
    <molecule id="Q9NX02-1"/>
    <property type="protein sequence ID" value="ENSP00000479109.1"/>
    <property type="gene ID" value="ENSG00000278682.4"/>
</dbReference>
<dbReference type="Ensembl" id="ENST00000613062.4">
    <molecule id="Q9NX02-1"/>
    <property type="protein sequence ID" value="ENSP00000483281.1"/>
    <property type="gene ID" value="ENSG00000273992.4"/>
</dbReference>
<dbReference type="Ensembl" id="ENST00000613485.4">
    <molecule id="Q9NX02-2"/>
    <property type="protein sequence ID" value="ENSP00000484351.1"/>
    <property type="gene ID" value="ENSG00000273992.4"/>
</dbReference>
<dbReference type="Ensembl" id="ENST00000613825.4">
    <molecule id="Q9NX02-1"/>
    <property type="protein sequence ID" value="ENSP00000483963.1"/>
    <property type="gene ID" value="ENSG00000274638.4"/>
</dbReference>
<dbReference type="Ensembl" id="ENST00000613851.1">
    <molecule id="Q9NX02-5"/>
    <property type="protein sequence ID" value="ENSP00000482628.1"/>
    <property type="gene ID" value="ENSG00000278789.4"/>
</dbReference>
<dbReference type="Ensembl" id="ENST00000615173.1">
    <molecule id="Q9NX02-1"/>
    <property type="protein sequence ID" value="ENSP00000482889.1"/>
    <property type="gene ID" value="ENSG00000273992.4"/>
</dbReference>
<dbReference type="Ensembl" id="ENST00000615391.4">
    <molecule id="Q9NX02-1"/>
    <property type="protein sequence ID" value="ENSP00000481851.1"/>
    <property type="gene ID" value="ENSG00000275399.4"/>
</dbReference>
<dbReference type="Ensembl" id="ENST00000615521.4">
    <molecule id="Q9NX02-1"/>
    <property type="protein sequence ID" value="ENSP00000479352.1"/>
    <property type="gene ID" value="ENSG00000275399.4"/>
</dbReference>
<dbReference type="Ensembl" id="ENST00000616040.4">
    <molecule id="Q9NX02-1"/>
    <property type="protein sequence ID" value="ENSP00000478876.1"/>
    <property type="gene ID" value="ENSG00000278789.4"/>
</dbReference>
<dbReference type="Ensembl" id="ENST00000616903.1">
    <molecule id="Q9NX02-5"/>
    <property type="protein sequence ID" value="ENSP00000482355.1"/>
    <property type="gene ID" value="ENSG00000275399.4"/>
</dbReference>
<dbReference type="Ensembl" id="ENST00000616919.4">
    <molecule id="Q9NX02-2"/>
    <property type="protein sequence ID" value="ENSP00000481564.1"/>
    <property type="gene ID" value="ENSG00000278789.4"/>
</dbReference>
<dbReference type="Ensembl" id="ENST00000618018.4">
    <molecule id="Q9NX02-2"/>
    <property type="protein sequence ID" value="ENSP00000483886.1"/>
    <property type="gene ID" value="ENSG00000275843.4"/>
</dbReference>
<dbReference type="Ensembl" id="ENST00000618694.1">
    <molecule id="Q9NX02-5"/>
    <property type="protein sequence ID" value="ENSP00000482465.1"/>
    <property type="gene ID" value="ENSG00000275843.4"/>
</dbReference>
<dbReference type="Ensembl" id="ENST00000618731.4">
    <molecule id="Q9NX02-2"/>
    <property type="protein sequence ID" value="ENSP00000478787.1"/>
    <property type="gene ID" value="ENSG00000273992.4"/>
</dbReference>
<dbReference type="Ensembl" id="ENST00000618789.1">
    <molecule id="Q9NX02-5"/>
    <property type="protein sequence ID" value="ENSP00000478318.1"/>
    <property type="gene ID" value="ENSG00000275796.4"/>
</dbReference>
<dbReference type="Ensembl" id="ENST00000618943.1">
    <molecule id="Q9NX02-5"/>
    <property type="protein sequence ID" value="ENSP00000482309.1"/>
    <property type="gene ID" value="ENSG00000274638.4"/>
</dbReference>
<dbReference type="Ensembl" id="ENST00000619281.4">
    <molecule id="Q9NX02-1"/>
    <property type="protein sequence ID" value="ENSP00000478265.1"/>
    <property type="gene ID" value="ENSG00000278789.4"/>
</dbReference>
<dbReference type="Ensembl" id="ENST00000619454.4">
    <molecule id="Q9NX02-1"/>
    <property type="protein sequence ID" value="ENSP00000483528.1"/>
    <property type="gene ID" value="ENSG00000274638.4"/>
</dbReference>
<dbReference type="Ensembl" id="ENST00000619664.4">
    <molecule id="Q9NX02-1"/>
    <property type="protein sequence ID" value="ENSP00000478774.1"/>
    <property type="gene ID" value="ENSG00000275796.4"/>
</dbReference>
<dbReference type="Ensembl" id="ENST00000619885.4">
    <molecule id="Q9NX02-2"/>
    <property type="protein sequence ID" value="ENSP00000483389.1"/>
    <property type="gene ID" value="ENSG00000278682.4"/>
</dbReference>
<dbReference type="Ensembl" id="ENST00000621057.4">
    <molecule id="Q9NX02-4"/>
    <property type="protein sequence ID" value="ENSP00000484382.1"/>
    <property type="gene ID" value="ENSG00000273992.4"/>
</dbReference>
<dbReference type="Ensembl" id="ENST00000621200.4">
    <molecule id="Q9NX02-1"/>
    <property type="protein sequence ID" value="ENSP00000479783.1"/>
    <property type="gene ID" value="ENSG00000275082.4"/>
</dbReference>
<dbReference type="Ensembl" id="ENST00000621239.4">
    <molecule id="Q9NX02-1"/>
    <property type="protein sequence ID" value="ENSP00000479713.1"/>
    <property type="gene ID" value="ENSG00000275082.4"/>
</dbReference>
<dbReference type="Ensembl" id="ENST00000621594.4">
    <molecule id="Q9NX02-1"/>
    <property type="protein sequence ID" value="ENSP00000478450.1"/>
    <property type="gene ID" value="ENSG00000275843.4"/>
</dbReference>
<dbReference type="Ensembl" id="ENST00000622042.4">
    <molecule id="Q9NX02-1"/>
    <property type="protein sequence ID" value="ENSP00000482253.1"/>
    <property type="gene ID" value="ENSG00000275796.4"/>
</dbReference>
<dbReference type="Ensembl" id="ENST00000622216.4">
    <molecule id="Q9NX02-2"/>
    <property type="protein sequence ID" value="ENSP00000482044.1"/>
    <property type="gene ID" value="ENSG00000275082.4"/>
</dbReference>
<dbReference type="Ensembl" id="ENST00000622444.1">
    <molecule id="Q9NX02-5"/>
    <property type="protein sequence ID" value="ENSP00000482065.1"/>
    <property type="gene ID" value="ENSG00000278682.4"/>
</dbReference>
<dbReference type="Ensembl" id="ENST00000622600.4">
    <molecule id="Q9NX02-2"/>
    <property type="protein sequence ID" value="ENSP00000482727.1"/>
    <property type="gene ID" value="ENSG00000274638.4"/>
</dbReference>
<dbReference type="Ensembl" id="ENST00000622773.4">
    <molecule id="Q9NX02-5"/>
    <property type="protein sequence ID" value="ENSP00000484759.1"/>
    <property type="gene ID" value="ENSG00000273992.4"/>
</dbReference>
<dbReference type="Ensembl" id="ENST00000622864.4">
    <molecule id="Q9NX02-2"/>
    <property type="protein sequence ID" value="ENSP00000477726.1"/>
    <property type="gene ID" value="ENSG00000275796.4"/>
</dbReference>
<dbReference type="GeneID" id="55655"/>
<dbReference type="KEGG" id="hsa:55655"/>
<dbReference type="MANE-Select" id="ENST00000448584.7">
    <property type="protein sequence ID" value="ENSP00000409370.2"/>
    <property type="RefSeq nucleotide sequence ID" value="NM_017852.5"/>
    <property type="RefSeq protein sequence ID" value="NP_060322.1"/>
</dbReference>
<dbReference type="UCSC" id="uc002qij.4">
    <molecule id="Q9NX02-1"/>
    <property type="organism name" value="human"/>
</dbReference>
<dbReference type="AGR" id="HGNC:22948"/>
<dbReference type="CTD" id="55655"/>
<dbReference type="DisGeNET" id="55655"/>
<dbReference type="GeneCards" id="NLRP2"/>
<dbReference type="HGNC" id="HGNC:22948">
    <property type="gene designation" value="NLRP2"/>
</dbReference>
<dbReference type="HPA" id="ENSG00000022556">
    <property type="expression patterns" value="Low tissue specificity"/>
</dbReference>
<dbReference type="MalaCards" id="NLRP2"/>
<dbReference type="MIM" id="609364">
    <property type="type" value="gene"/>
</dbReference>
<dbReference type="MIM" id="620332">
    <property type="type" value="phenotype"/>
</dbReference>
<dbReference type="neXtProt" id="NX_Q9NX02"/>
<dbReference type="OpenTargets" id="ENSG00000022556"/>
<dbReference type="PharmGKB" id="PA162397946"/>
<dbReference type="VEuPathDB" id="HostDB:ENSG00000022556"/>
<dbReference type="eggNOG" id="ENOG502S92U">
    <property type="taxonomic scope" value="Eukaryota"/>
</dbReference>
<dbReference type="GeneTree" id="ENSGT00940000161714"/>
<dbReference type="HOGENOM" id="CLU_002274_2_1_1"/>
<dbReference type="InParanoid" id="Q9NX02"/>
<dbReference type="OMA" id="GNDQNNM"/>
<dbReference type="OrthoDB" id="120976at2759"/>
<dbReference type="PAN-GO" id="Q9NX02">
    <property type="GO annotations" value="5 GO annotations based on evolutionary models"/>
</dbReference>
<dbReference type="PhylomeDB" id="Q9NX02"/>
<dbReference type="PathwayCommons" id="Q9NX02"/>
<dbReference type="SignaLink" id="Q9NX02"/>
<dbReference type="BioGRID-ORCS" id="55655">
    <property type="hits" value="21 hits in 1150 CRISPR screens"/>
</dbReference>
<dbReference type="ChiTaRS" id="NLRP2">
    <property type="organism name" value="human"/>
</dbReference>
<dbReference type="GeneWiki" id="NLRP2"/>
<dbReference type="GenomeRNAi" id="55655"/>
<dbReference type="Pharos" id="Q9NX02">
    <property type="development level" value="Tbio"/>
</dbReference>
<dbReference type="PRO" id="PR:Q9NX02"/>
<dbReference type="Proteomes" id="UP000005640">
    <property type="component" value="Chromosome 19"/>
</dbReference>
<dbReference type="RNAct" id="Q9NX02">
    <property type="molecule type" value="protein"/>
</dbReference>
<dbReference type="Bgee" id="ENSG00000022556">
    <property type="expression patterns" value="Expressed in primordial germ cell in gonad and 100 other cell types or tissues"/>
</dbReference>
<dbReference type="ExpressionAtlas" id="Q9NX02">
    <property type="expression patterns" value="baseline and differential"/>
</dbReference>
<dbReference type="GO" id="GO:0005737">
    <property type="term" value="C:cytoplasm"/>
    <property type="evidence" value="ECO:0000314"/>
    <property type="project" value="HGNC-UCL"/>
</dbReference>
<dbReference type="GO" id="GO:0005829">
    <property type="term" value="C:cytosol"/>
    <property type="evidence" value="ECO:0000314"/>
    <property type="project" value="HPA"/>
</dbReference>
<dbReference type="GO" id="GO:0005794">
    <property type="term" value="C:Golgi apparatus"/>
    <property type="evidence" value="ECO:0000314"/>
    <property type="project" value="HPA"/>
</dbReference>
<dbReference type="GO" id="GO:0043231">
    <property type="term" value="C:intracellular membrane-bounded organelle"/>
    <property type="evidence" value="ECO:0000314"/>
    <property type="project" value="HPA"/>
</dbReference>
<dbReference type="GO" id="GO:0005524">
    <property type="term" value="F:ATP binding"/>
    <property type="evidence" value="ECO:0007669"/>
    <property type="project" value="UniProtKB-KW"/>
</dbReference>
<dbReference type="GO" id="GO:0032090">
    <property type="term" value="F:Pyrin domain binding"/>
    <property type="evidence" value="ECO:0000353"/>
    <property type="project" value="HGNC-UCL"/>
</dbReference>
<dbReference type="GO" id="GO:0006915">
    <property type="term" value="P:apoptotic process"/>
    <property type="evidence" value="ECO:0007669"/>
    <property type="project" value="UniProtKB-KW"/>
</dbReference>
<dbReference type="GO" id="GO:0006954">
    <property type="term" value="P:inflammatory response"/>
    <property type="evidence" value="ECO:0007669"/>
    <property type="project" value="UniProtKB-KW"/>
</dbReference>
<dbReference type="GO" id="GO:0045087">
    <property type="term" value="P:innate immune response"/>
    <property type="evidence" value="ECO:0007669"/>
    <property type="project" value="UniProtKB-KW"/>
</dbReference>
<dbReference type="GO" id="GO:1901223">
    <property type="term" value="P:negative regulation of non-canonical NF-kappaB signal transduction"/>
    <property type="evidence" value="ECO:0000316"/>
    <property type="project" value="UniProtKB"/>
</dbReference>
<dbReference type="GO" id="GO:0032731">
    <property type="term" value="P:positive regulation of interleukin-1 beta production"/>
    <property type="evidence" value="ECO:0000314"/>
    <property type="project" value="HGNC-UCL"/>
</dbReference>
<dbReference type="GO" id="GO:0050727">
    <property type="term" value="P:regulation of inflammatory response"/>
    <property type="evidence" value="ECO:0000318"/>
    <property type="project" value="GO_Central"/>
</dbReference>
<dbReference type="CDD" id="cd08320">
    <property type="entry name" value="Pyrin_NALPs"/>
    <property type="match status" value="1"/>
</dbReference>
<dbReference type="FunFam" id="3.40.50.300:FF:001435">
    <property type="entry name" value="NACHT, LRR and PYD domains-containing protein 2"/>
    <property type="match status" value="1"/>
</dbReference>
<dbReference type="FunFam" id="3.80.10.10:FF:000662">
    <property type="entry name" value="NACHT, LRR and PYD domains-containing protein 2"/>
    <property type="match status" value="1"/>
</dbReference>
<dbReference type="FunFam" id="1.10.533.10:FF:000067">
    <property type="entry name" value="NLR family pyrin domain containing 2"/>
    <property type="match status" value="1"/>
</dbReference>
<dbReference type="Gene3D" id="1.10.533.10">
    <property type="entry name" value="Death Domain, Fas"/>
    <property type="match status" value="1"/>
</dbReference>
<dbReference type="Gene3D" id="3.40.50.300">
    <property type="entry name" value="P-loop containing nucleotide triphosphate hydrolases"/>
    <property type="match status" value="1"/>
</dbReference>
<dbReference type="Gene3D" id="3.80.10.10">
    <property type="entry name" value="Ribonuclease Inhibitor"/>
    <property type="match status" value="1"/>
</dbReference>
<dbReference type="InterPro" id="IPR004020">
    <property type="entry name" value="DAPIN"/>
</dbReference>
<dbReference type="InterPro" id="IPR011029">
    <property type="entry name" value="DEATH-like_dom_sf"/>
</dbReference>
<dbReference type="InterPro" id="IPR001611">
    <property type="entry name" value="Leu-rich_rpt"/>
</dbReference>
<dbReference type="InterPro" id="IPR032675">
    <property type="entry name" value="LRR_dom_sf"/>
</dbReference>
<dbReference type="InterPro" id="IPR007111">
    <property type="entry name" value="NACHT_NTPase"/>
</dbReference>
<dbReference type="InterPro" id="IPR041267">
    <property type="entry name" value="NLRP_HD2"/>
</dbReference>
<dbReference type="InterPro" id="IPR050637">
    <property type="entry name" value="NLRP_innate_immun_reg"/>
</dbReference>
<dbReference type="InterPro" id="IPR041075">
    <property type="entry name" value="NOD1/2_WH"/>
</dbReference>
<dbReference type="InterPro" id="IPR027417">
    <property type="entry name" value="P-loop_NTPase"/>
</dbReference>
<dbReference type="PANTHER" id="PTHR45690">
    <property type="entry name" value="NACHT, LRR AND PYD DOMAINS-CONTAINING PROTEIN 12"/>
    <property type="match status" value="1"/>
</dbReference>
<dbReference type="PANTHER" id="PTHR45690:SF14">
    <property type="entry name" value="NACHT, LRR AND PYD DOMAINS-CONTAINING PROTEIN 2"/>
    <property type="match status" value="1"/>
</dbReference>
<dbReference type="Pfam" id="PF13516">
    <property type="entry name" value="LRR_6"/>
    <property type="match status" value="4"/>
</dbReference>
<dbReference type="Pfam" id="PF05729">
    <property type="entry name" value="NACHT"/>
    <property type="match status" value="1"/>
</dbReference>
<dbReference type="Pfam" id="PF17776">
    <property type="entry name" value="NLRC4_HD2"/>
    <property type="match status" value="1"/>
</dbReference>
<dbReference type="Pfam" id="PF17779">
    <property type="entry name" value="NOD2_WH"/>
    <property type="match status" value="1"/>
</dbReference>
<dbReference type="Pfam" id="PF02758">
    <property type="entry name" value="PYRIN"/>
    <property type="match status" value="1"/>
</dbReference>
<dbReference type="SMART" id="SM00368">
    <property type="entry name" value="LRR_RI"/>
    <property type="match status" value="8"/>
</dbReference>
<dbReference type="SMART" id="SM01289">
    <property type="entry name" value="PYRIN"/>
    <property type="match status" value="1"/>
</dbReference>
<dbReference type="SUPFAM" id="SSF47986">
    <property type="entry name" value="DEATH domain"/>
    <property type="match status" value="1"/>
</dbReference>
<dbReference type="SUPFAM" id="SSF52540">
    <property type="entry name" value="P-loop containing nucleoside triphosphate hydrolases"/>
    <property type="match status" value="1"/>
</dbReference>
<dbReference type="SUPFAM" id="SSF52047">
    <property type="entry name" value="RNI-like"/>
    <property type="match status" value="1"/>
</dbReference>
<dbReference type="PROSITE" id="PS50824">
    <property type="entry name" value="DAPIN"/>
    <property type="match status" value="1"/>
</dbReference>
<dbReference type="PROSITE" id="PS50837">
    <property type="entry name" value="NACHT"/>
    <property type="match status" value="1"/>
</dbReference>
<keyword id="KW-0002">3D-structure</keyword>
<keyword id="KW-0025">Alternative splicing</keyword>
<keyword id="KW-0053">Apoptosis</keyword>
<keyword id="KW-0067">ATP-binding</keyword>
<keyword id="KW-0963">Cytoplasm</keyword>
<keyword id="KW-0225">Disease variant</keyword>
<keyword id="KW-0391">Immunity</keyword>
<keyword id="KW-0395">Inflammatory response</keyword>
<keyword id="KW-0399">Innate immunity</keyword>
<keyword id="KW-0433">Leucine-rich repeat</keyword>
<keyword id="KW-0547">Nucleotide-binding</keyword>
<keyword id="KW-0597">Phosphoprotein</keyword>
<keyword id="KW-1267">Proteomics identification</keyword>
<keyword id="KW-1185">Reference proteome</keyword>
<keyword id="KW-0677">Repeat</keyword>
<organism>
    <name type="scientific">Homo sapiens</name>
    <name type="common">Human</name>
    <dbReference type="NCBI Taxonomy" id="9606"/>
    <lineage>
        <taxon>Eukaryota</taxon>
        <taxon>Metazoa</taxon>
        <taxon>Chordata</taxon>
        <taxon>Craniata</taxon>
        <taxon>Vertebrata</taxon>
        <taxon>Euteleostomi</taxon>
        <taxon>Mammalia</taxon>
        <taxon>Eutheria</taxon>
        <taxon>Euarchontoglires</taxon>
        <taxon>Primates</taxon>
        <taxon>Haplorrhini</taxon>
        <taxon>Catarrhini</taxon>
        <taxon>Hominidae</taxon>
        <taxon>Homo</taxon>
    </lineage>
</organism>
<sequence length="1062" mass="120515">MVSSAQMGFNLQALLEQLSQDELSKFKYLITTFSLAHELQKIPHKEVDKADGKQLVEILTTHCDSYWVEMASLQVFEKMHRMDLSERAKDEVREAALKSFNKRKPLSLGITRKERPPLDVDEMLERFKTEAQAFTETKGNVICLGKEVFKGKKPDKDNRCRYILKTKFREMWKSWPGDSKEVQVMAERYKMLIPFSNPRVLPGPFSYTVVLYGPAGLGKTTLAQKLMLDWAEDNLIHKFKYAFYLSCRELSRLGPCSFAELVFRDWPELQDDIPHILAQARKILFVIDGFDELGAAPGALIEDICGDWEKKKPVPVLLGSLLNRVMLPKAALLVTTRPRALRDLRILAEEPIYIRVEGFLEEDRRAYFLRHFGDEDQAMRAFELMRSNAALFQLGSAPAVCWIVCTTLKLQMEKGEDPVPTCLTRTGLFLRFLCSRFPQGAQLRGALRTLSLLAAQGLWAQTSVLHREDLERLGVQESDLRLFLDGDILRQDRVSKGCYSFIHLSFQQFLTALFYTLEKEEEEDRDGHTWDIGDVQKLLSGVERLRNPDLIQAGYYSFGLANEKRAKELEATFGCRMSPDIKQELLRCDISCKGGHSTVTDLQELLGCLYESQEEELVKEVMAQFKEISLHLNAVDVVPSSFCVKHCRNLQKMSLQVIKENLPENVTASESDAEVERSQDDQHMLPFWTDLCSIFGSNKDLMGLAINDSFLSASLVRILCEQIASDTCHLQRVVFKNISPADAHRNLCLALRGHKTVTYLTLQGNDQDDMFPALCEVLRHPECNLRYLGLVSCSATTQQWADLSLALEVNQSLTCVNLSDNELLDEGAKLLYTTLRHPKCFLQRLSLENCHLTEANCKDLAAVLVVSRELTHLCLAKNPIGNTGVKFLCEGLRYPECKLQTLVLWNCDITSDGCCDLTKLLQEKSSLLCLDLGLNHIGVKGMKFLCEALRKPLCNLRCLWLWGCSIPPFSCEDLCSALSCNQSLVTLDLGQNPLGSSGVKMLFETLTCSSGTLRTLRLKIDDFNDELNKLLEEIEEKNPQLIIDTEKHHPWAERPSSHDFMI</sequence>
<comment type="function">
    <text evidence="6">Suppresses TNF- and CD40-induced NFKB1 activity at the level of the IKK complex, by inhibiting NFKBIA degradation induced by TNF. When associated with PYCARD, activates CASP1, leading to the secretion of mature pro-inflammatory cytokine IL1B. May be a component of the inflammasome, a protein complex which also includes PYCARD, CARD8 and CASP1 and whose function would be the activation of pro-inflammatory caspases.</text>
</comment>
<comment type="subunit">
    <text evidence="5 6 8 9">Interacts with CHUK (PubMed:15456791). Interacts with IKBKB (PubMed:15456791). Interacts with IKBKG (PubMed:15456791). Interacts with MEFV (PubMed:17431422). Interacts with PYCARD (PubMed:15030775, PubMed:15456791). Interacts (via pyrin domain) with PYDC2 (PubMed:17178784). Interacts with CARD8 (PubMed:15030775).</text>
</comment>
<comment type="interaction">
    <interactant intactId="EBI-6374482">
        <id>Q9NX02</id>
    </interactant>
    <interactant intactId="EBI-52363471">
        <id>Q676U5-1</id>
        <label>ATG16L1</label>
    </interactant>
    <organismsDiffer>false</organismsDiffer>
    <experiments>2</experiments>
</comment>
<comment type="interaction">
    <interactant intactId="EBI-6374482">
        <id>Q9NX02</id>
    </interactant>
    <interactant intactId="EBI-6374418">
        <id>Q56P42</id>
        <label>PYDC2</label>
    </interactant>
    <organismsDiffer>false</organismsDiffer>
    <experiments>6</experiments>
</comment>
<comment type="subcellular location">
    <subcellularLocation>
        <location evidence="5 6">Cytoplasm</location>
    </subcellularLocation>
</comment>
<comment type="alternative products">
    <event type="alternative splicing"/>
    <isoform>
        <id>Q9NX02-1</id>
        <name>1</name>
        <sequence type="displayed"/>
    </isoform>
    <isoform>
        <id>Q9NX02-2</id>
        <name>2</name>
        <sequence type="described" ref="VSP_005522"/>
    </isoform>
    <isoform>
        <id>Q9NX02-3</id>
        <name>3</name>
        <sequence type="described" ref="VSP_017086"/>
    </isoform>
    <isoform>
        <id>Q9NX02-4</id>
        <name>4</name>
        <sequence type="described" ref="VSP_017085"/>
    </isoform>
    <isoform>
        <id>Q9NX02-5</id>
        <name>5</name>
        <sequence type="described" ref="VSP_044898"/>
    </isoform>
</comment>
<comment type="tissue specificity">
    <text evidence="6 10">Expressed at high levels in lung, placenta and thymus and at lower levels in ovary, intestine and brain (PubMed:15456791). Highly abundant in oocytes and early embryos, however poorly expressed in somatic tissues such as brain, kidney, liver and spinal cord (PubMed:30877238).</text>
</comment>
<comment type="induction">
    <text evidence="6">By interferons and bacterial lipopolysaccharides (LPS).</text>
</comment>
<comment type="domain">
    <text>When isolated, the NACHT domain is involved in interaction with CARD8. This interaction is not detected for the full-length protein, maybe due to autoinhibition, this inhibition might by relieved by an inducible change in protein folding.</text>
</comment>
<comment type="domain">
    <text>The pyrin domain is necessary and sufficient for suppression of NFKB1 activation induced by TNF and for inducing IL1B secretion in collaboration with caspase-1. It is involved in interaction with PYCARD.</text>
</comment>
<comment type="disease" evidence="10 11">
    <disease id="DI-06661">
        <name>Oocyte/zygote/embryo maturation arrest 18</name>
        <acronym>OZEMA18</acronym>
        <description>An autosomal recessive female infertility disorder. In affected women, ovulation and fertilization proceed normally but embryos are arrested at early stages of development or cannot establish pregnancy after implantation.</description>
        <dbReference type="MIM" id="620332"/>
    </disease>
    <text>The disease is caused by variants affecting the gene represented in this entry.</text>
</comment>
<comment type="miscellaneous">
    <molecule>Isoform 3</molecule>
    <text evidence="17">May be produced at very low levels due to a premature stop codon in the mRNA, leading to nonsense-mediated mRNA decay.</text>
</comment>
<comment type="similarity">
    <text evidence="17">Belongs to the NLRP family.</text>
</comment>
<comment type="sequence caution" evidence="17">
    <conflict type="erroneous initiation">
        <sequence resource="EMBL-CDS" id="AAG15253"/>
    </conflict>
</comment>
<comment type="sequence caution" evidence="17">
    <conflict type="erroneous initiation">
        <sequence resource="EMBL-CDS" id="BAA91377"/>
    </conflict>
</comment>
<comment type="sequence caution" evidence="17">
    <conflict type="frameshift">
        <sequence resource="EMBL-CDS" id="BAD92537"/>
    </conflict>
</comment>
<comment type="sequence caution" evidence="17">
    <conflict type="miscellaneous discrepancy">
        <sequence resource="EMBL-CDS" id="BAD92537"/>
    </conflict>
    <text>Erroneous prediction of the initiator methionine.</text>
</comment>
<protein>
    <recommendedName>
        <fullName>NACHT, LRR and PYD domains-containing protein 2</fullName>
    </recommendedName>
    <alternativeName>
        <fullName>Nucleotide-binding site protein 1</fullName>
    </alternativeName>
    <alternativeName>
        <fullName>PYRIN domain and NACHT domain-containing protein 1</fullName>
    </alternativeName>
    <alternativeName>
        <fullName>PYRIN-containing APAF1-like protein 2</fullName>
    </alternativeName>
</protein>
<feature type="chain" id="PRO_0000080888" description="NACHT, LRR and PYD domains-containing protein 2">
    <location>
        <begin position="1"/>
        <end position="1062"/>
    </location>
</feature>
<feature type="domain" description="Pyrin" evidence="1">
    <location>
        <begin position="1"/>
        <end position="94"/>
    </location>
</feature>
<feature type="domain" description="NACHT" evidence="2">
    <location>
        <begin position="207"/>
        <end position="526"/>
    </location>
</feature>
<feature type="repeat" description="LRR 1">
    <location>
        <begin position="812"/>
        <end position="832"/>
    </location>
</feature>
<feature type="repeat" description="LRR 2">
    <location>
        <begin position="841"/>
        <end position="861"/>
    </location>
</feature>
<feature type="repeat" description="LRR 3">
    <location>
        <begin position="869"/>
        <end position="889"/>
    </location>
</feature>
<feature type="repeat" description="LRR 4">
    <location>
        <begin position="898"/>
        <end position="918"/>
    </location>
</feature>
<feature type="repeat" description="LRR 5">
    <location>
        <begin position="926"/>
        <end position="946"/>
    </location>
</feature>
<feature type="repeat" description="LRR 6">
    <location>
        <begin position="955"/>
        <end position="976"/>
    </location>
</feature>
<feature type="repeat" description="LRR 7">
    <location>
        <begin position="983"/>
        <end position="1003"/>
    </location>
</feature>
<feature type="repeat" description="LRR 8">
    <location>
        <begin position="1010"/>
        <end position="1033"/>
    </location>
</feature>
<feature type="binding site" evidence="2">
    <location>
        <begin position="213"/>
        <end position="220"/>
    </location>
    <ligand>
        <name>ATP</name>
        <dbReference type="ChEBI" id="CHEBI:30616"/>
    </ligand>
</feature>
<feature type="modified residue" description="Phosphoserine" evidence="18 19">
    <location>
        <position position="671"/>
    </location>
</feature>
<feature type="splice variant" id="VSP_044898" description="In isoform 5." evidence="14">
    <location>
        <begin position="47"/>
        <end position="69"/>
    </location>
</feature>
<feature type="splice variant" id="VSP_017085" description="In isoform 4." evidence="16">
    <location>
        <begin position="109"/>
        <end position="132"/>
    </location>
</feature>
<feature type="splice variant" id="VSP_005522" description="In isoform 2." evidence="13">
    <location>
        <begin position="133"/>
        <end position="154"/>
    </location>
</feature>
<feature type="splice variant" id="VSP_017086" description="In isoform 3." evidence="15">
    <location>
        <begin position="847"/>
        <end position="1062"/>
    </location>
</feature>
<feature type="sequence variant" id="VAR_084172" description="In OZEMA18." evidence="11">
    <location>
        <begin position="115"/>
        <end position="1062"/>
    </location>
</feature>
<feature type="sequence variant" id="VAR_084586" description="In OZEMA18; uncertain significance." evidence="10 12">
    <original>W</original>
    <variation>C</variation>
    <location>
        <position position="175"/>
    </location>
</feature>
<feature type="sequence variant" id="VAR_053616" description="In dbSNP:rs17699678." evidence="10">
    <original>T</original>
    <variation>M</variation>
    <location>
        <position position="221"/>
    </location>
</feature>
<feature type="sequence variant" id="VAR_084587" description="In OZEMA18; uncertain significance; dbSNP:rs1194295774." evidence="10">
    <original>F</original>
    <variation>S</variation>
    <location>
        <position position="258"/>
    </location>
</feature>
<feature type="sequence variant" id="VAR_053617" description="In dbSNP:rs3745904.">
    <original>E</original>
    <variation>Q</variation>
    <location>
        <position position="302"/>
    </location>
</feature>
<feature type="sequence variant" id="VAR_025011" description="In dbSNP:rs4306647." evidence="3">
    <original>R</original>
    <variation>K</variation>
    <location>
        <position position="364"/>
    </location>
</feature>
<feature type="sequence variant" id="VAR_068977" description="In dbSNP:rs61735082." evidence="4">
    <original>T</original>
    <variation>A</variation>
    <location>
        <position position="516"/>
    </location>
</feature>
<feature type="sequence variant" id="VAR_068978" description="In dbSNP:rs61735083." evidence="4">
    <original>E</original>
    <variation>G</variation>
    <location>
        <position position="522"/>
    </location>
</feature>
<feature type="sequence variant" id="VAR_068979" description="In dbSNP:rs34804158." evidence="4 12">
    <original>T</original>
    <variation>A</variation>
    <location>
        <position position="529"/>
    </location>
</feature>
<feature type="sequence variant" id="VAR_084588" description="In OZEMA18; uncertain significance; dbSNP:rs1471763280." evidence="10">
    <original>E</original>
    <variation>V</variation>
    <location>
        <position position="616"/>
    </location>
</feature>
<feature type="sequence variant" id="VAR_084589" description="In OZEMA18." evidence="10">
    <location>
        <begin position="654"/>
        <end position="1062"/>
    </location>
</feature>
<feature type="sequence variant" id="VAR_084590" description="In OZEMA18." evidence="10">
    <location>
        <begin position="752"/>
        <end position="1062"/>
    </location>
</feature>
<feature type="sequence variant" id="VAR_084591" description="In OZEMA18; uncertain significance." evidence="10">
    <original>E</original>
    <variation>D</variation>
    <location>
        <position position="848"/>
    </location>
</feature>
<feature type="sequence variant" id="VAR_062140" description="In dbSNP:rs59779270.">
    <original>G</original>
    <variation>R</variation>
    <location>
        <position position="884"/>
    </location>
</feature>
<feature type="sequence variant" id="VAR_020006" description="In dbSNP:rs1043673." evidence="7">
    <original>A</original>
    <variation>E</variation>
    <location>
        <position position="1052"/>
    </location>
</feature>
<feature type="sequence conflict" description="In Ref. 1; AAG15253." evidence="17" ref="1">
    <original>M</original>
    <variation>V</variation>
    <location>
        <position position="1"/>
    </location>
</feature>
<feature type="sequence conflict" description="In Ref. 1; AAG15253." evidence="17" ref="1">
    <original>L</original>
    <variation>P</variation>
    <location>
        <position position="35"/>
    </location>
</feature>
<feature type="sequence conflict" description="In Ref. 4; BAG64129." evidence="17" ref="4">
    <original>E</original>
    <variation>G</variation>
    <location>
        <position position="46"/>
    </location>
</feature>
<feature type="sequence conflict" description="In Ref. 7; AAH39269." evidence="17" ref="7">
    <original>I</original>
    <variation>V</variation>
    <location>
        <position position="58"/>
    </location>
</feature>
<feature type="sequence conflict" description="In Ref. 4; BAG64129." evidence="17" ref="4">
    <original>G</original>
    <variation>S</variation>
    <location>
        <position position="216"/>
    </location>
</feature>
<feature type="sequence conflict" description="In Ref. 4; BAB15293." evidence="17" ref="4">
    <original>I</original>
    <variation>S</variation>
    <location>
        <position position="304"/>
    </location>
</feature>
<feature type="sequence conflict" description="In Ref. 1; AAG15253." evidence="17" ref="1">
    <location>
        <position position="980"/>
    </location>
</feature>
<proteinExistence type="evidence at protein level"/>